<gene>
    <name type="ordered locus">M164_1444</name>
</gene>
<accession>C4KHI6</accession>
<proteinExistence type="inferred from homology"/>
<name>ARCH_SACI6</name>
<keyword id="KW-0106">Calcium</keyword>
<keyword id="KW-0479">Metal-binding</keyword>
<keyword id="KW-0819">tRNA processing</keyword>
<evidence type="ECO:0000250" key="1"/>
<evidence type="ECO:0000255" key="2">
    <source>
        <dbReference type="HAMAP-Rule" id="MF_01222"/>
    </source>
</evidence>
<protein>
    <recommendedName>
        <fullName evidence="2">Protein archease</fullName>
    </recommendedName>
</protein>
<dbReference type="EMBL" id="CP001402">
    <property type="protein sequence ID" value="ACR42050.1"/>
    <property type="molecule type" value="Genomic_DNA"/>
</dbReference>
<dbReference type="RefSeq" id="WP_012711448.1">
    <property type="nucleotide sequence ID" value="NC_012726.1"/>
</dbReference>
<dbReference type="SMR" id="C4KHI6"/>
<dbReference type="KEGG" id="sid:M164_1444"/>
<dbReference type="HOGENOM" id="CLU_111362_3_0_2"/>
<dbReference type="Proteomes" id="UP000001479">
    <property type="component" value="Chromosome"/>
</dbReference>
<dbReference type="GO" id="GO:0005509">
    <property type="term" value="F:calcium ion binding"/>
    <property type="evidence" value="ECO:0007669"/>
    <property type="project" value="UniProtKB-UniRule"/>
</dbReference>
<dbReference type="GO" id="GO:0006388">
    <property type="term" value="P:tRNA splicing, via endonucleolytic cleavage and ligation"/>
    <property type="evidence" value="ECO:0007669"/>
    <property type="project" value="UniProtKB-UniRule"/>
</dbReference>
<dbReference type="Gene3D" id="3.55.10.10">
    <property type="entry name" value="Archease domain"/>
    <property type="match status" value="1"/>
</dbReference>
<dbReference type="HAMAP" id="MF_01222">
    <property type="entry name" value="Archease_arch"/>
    <property type="match status" value="1"/>
</dbReference>
<dbReference type="InterPro" id="IPR002804">
    <property type="entry name" value="Archease"/>
</dbReference>
<dbReference type="InterPro" id="IPR022952">
    <property type="entry name" value="Archease_arc"/>
</dbReference>
<dbReference type="InterPro" id="IPR023572">
    <property type="entry name" value="Archease_dom"/>
</dbReference>
<dbReference type="InterPro" id="IPR036820">
    <property type="entry name" value="Archease_dom_sf"/>
</dbReference>
<dbReference type="NCBIfam" id="NF001617">
    <property type="entry name" value="PRK00407.1"/>
    <property type="match status" value="1"/>
</dbReference>
<dbReference type="PANTHER" id="PTHR12682">
    <property type="entry name" value="ARCHEASE"/>
    <property type="match status" value="1"/>
</dbReference>
<dbReference type="PANTHER" id="PTHR12682:SF11">
    <property type="entry name" value="PROTEIN ARCHEASE"/>
    <property type="match status" value="1"/>
</dbReference>
<dbReference type="Pfam" id="PF01951">
    <property type="entry name" value="Archease"/>
    <property type="match status" value="1"/>
</dbReference>
<dbReference type="SUPFAM" id="SSF69819">
    <property type="entry name" value="MTH1598-like"/>
    <property type="match status" value="1"/>
</dbReference>
<organism>
    <name type="scientific">Saccharolobus islandicus (strain M.16.4 / Kamchatka #3)</name>
    <name type="common">Sulfolobus islandicus</name>
    <dbReference type="NCBI Taxonomy" id="426118"/>
    <lineage>
        <taxon>Archaea</taxon>
        <taxon>Thermoproteota</taxon>
        <taxon>Thermoprotei</taxon>
        <taxon>Sulfolobales</taxon>
        <taxon>Sulfolobaceae</taxon>
        <taxon>Saccharolobus</taxon>
    </lineage>
</organism>
<reference key="1">
    <citation type="journal article" date="2009" name="Proc. Natl. Acad. Sci. U.S.A.">
        <title>Biogeography of the Sulfolobus islandicus pan-genome.</title>
        <authorList>
            <person name="Reno M.L."/>
            <person name="Held N.L."/>
            <person name="Fields C.J."/>
            <person name="Burke P.V."/>
            <person name="Whitaker R.J."/>
        </authorList>
    </citation>
    <scope>NUCLEOTIDE SEQUENCE [LARGE SCALE GENOMIC DNA]</scope>
    <source>
        <strain>M.16.4 / Kamchatka #3</strain>
    </source>
</reference>
<comment type="function">
    <text evidence="1">Activates the tRNA-splicing ligase complex by facilitating the enzymatic turnover of catalytic subunit RtcB. Acts by promoting the guanylylation of RtcB, a key intermediate step in tRNA ligation. Can also alter the NTP specificity of RtcB such that ATP, dGTP or ITP is used efficiently (By similarity).</text>
</comment>
<comment type="similarity">
    <text evidence="2">Belongs to the archease family.</text>
</comment>
<feature type="chain" id="PRO_1000213972" description="Protein archease">
    <location>
        <begin position="1"/>
        <end position="139"/>
    </location>
</feature>
<feature type="binding site" evidence="1">
    <location>
        <position position="12"/>
    </location>
    <ligand>
        <name>Ca(2+)</name>
        <dbReference type="ChEBI" id="CHEBI:29108"/>
    </ligand>
</feature>
<feature type="binding site" evidence="1">
    <location>
        <position position="138"/>
    </location>
    <ligand>
        <name>Ca(2+)</name>
        <dbReference type="ChEBI" id="CHEBI:29108"/>
    </ligand>
</feature>
<feature type="binding site" evidence="1">
    <location>
        <position position="139"/>
    </location>
    <ligand>
        <name>Ca(2+)</name>
        <dbReference type="ChEBI" id="CHEBI:29108"/>
    </ligand>
</feature>
<sequence>MRSFEFFEHTADVGIRAYGKSLEEAFSNAALGVFEVITDTSKVKPIEYREIYLNGYDLENLLYKWIEELLYYYDSELMVFSKFDLMIDQDSMTLEGKAWGEKFNGKIHERRTVVKAMTYHQLSIEKTENGYVITFVVDI</sequence>